<name>RS6_RICPU</name>
<organism>
    <name type="scientific">Rickettsia peacockii (strain Rustic)</name>
    <dbReference type="NCBI Taxonomy" id="562019"/>
    <lineage>
        <taxon>Bacteria</taxon>
        <taxon>Pseudomonadati</taxon>
        <taxon>Pseudomonadota</taxon>
        <taxon>Alphaproteobacteria</taxon>
        <taxon>Rickettsiales</taxon>
        <taxon>Rickettsiaceae</taxon>
        <taxon>Rickettsieae</taxon>
        <taxon>Rickettsia</taxon>
        <taxon>spotted fever group</taxon>
    </lineage>
</organism>
<sequence length="121" mass="13899">MSFYESVFIIRQDVSLNDIDKIVDDFAKIIKDNNGTIIKKEYWGLRTLAYKIGNNKKGHYYFLGLDITGNVKEELERKMKLNENIIRFLTIQADSISSEPSPILKNQSTENAPVIDVTINN</sequence>
<proteinExistence type="inferred from homology"/>
<dbReference type="EMBL" id="CP001227">
    <property type="protein sequence ID" value="ACR47310.1"/>
    <property type="molecule type" value="Genomic_DNA"/>
</dbReference>
<dbReference type="RefSeq" id="WP_012150292.1">
    <property type="nucleotide sequence ID" value="NC_012730.1"/>
</dbReference>
<dbReference type="SMR" id="C4K159"/>
<dbReference type="GeneID" id="79936866"/>
<dbReference type="KEGG" id="rpk:RPR_02375"/>
<dbReference type="HOGENOM" id="CLU_113441_2_0_5"/>
<dbReference type="Proteomes" id="UP000005015">
    <property type="component" value="Chromosome"/>
</dbReference>
<dbReference type="GO" id="GO:0005737">
    <property type="term" value="C:cytoplasm"/>
    <property type="evidence" value="ECO:0007669"/>
    <property type="project" value="UniProtKB-ARBA"/>
</dbReference>
<dbReference type="GO" id="GO:1990904">
    <property type="term" value="C:ribonucleoprotein complex"/>
    <property type="evidence" value="ECO:0007669"/>
    <property type="project" value="UniProtKB-KW"/>
</dbReference>
<dbReference type="GO" id="GO:0005840">
    <property type="term" value="C:ribosome"/>
    <property type="evidence" value="ECO:0007669"/>
    <property type="project" value="UniProtKB-KW"/>
</dbReference>
<dbReference type="GO" id="GO:0070181">
    <property type="term" value="F:small ribosomal subunit rRNA binding"/>
    <property type="evidence" value="ECO:0007669"/>
    <property type="project" value="TreeGrafter"/>
</dbReference>
<dbReference type="GO" id="GO:0003735">
    <property type="term" value="F:structural constituent of ribosome"/>
    <property type="evidence" value="ECO:0007669"/>
    <property type="project" value="InterPro"/>
</dbReference>
<dbReference type="GO" id="GO:0006412">
    <property type="term" value="P:translation"/>
    <property type="evidence" value="ECO:0007669"/>
    <property type="project" value="UniProtKB-UniRule"/>
</dbReference>
<dbReference type="CDD" id="cd00473">
    <property type="entry name" value="bS6"/>
    <property type="match status" value="1"/>
</dbReference>
<dbReference type="Gene3D" id="3.30.70.60">
    <property type="match status" value="1"/>
</dbReference>
<dbReference type="HAMAP" id="MF_00360">
    <property type="entry name" value="Ribosomal_bS6"/>
    <property type="match status" value="1"/>
</dbReference>
<dbReference type="InterPro" id="IPR000529">
    <property type="entry name" value="Ribosomal_bS6"/>
</dbReference>
<dbReference type="InterPro" id="IPR035980">
    <property type="entry name" value="Ribosomal_bS6_sf"/>
</dbReference>
<dbReference type="InterPro" id="IPR020814">
    <property type="entry name" value="Ribosomal_S6_plastid/chlpt"/>
</dbReference>
<dbReference type="InterPro" id="IPR014717">
    <property type="entry name" value="Transl_elong_EF1B/ribsomal_bS6"/>
</dbReference>
<dbReference type="NCBIfam" id="TIGR00166">
    <property type="entry name" value="S6"/>
    <property type="match status" value="1"/>
</dbReference>
<dbReference type="PANTHER" id="PTHR21011">
    <property type="entry name" value="MITOCHONDRIAL 28S RIBOSOMAL PROTEIN S6"/>
    <property type="match status" value="1"/>
</dbReference>
<dbReference type="PANTHER" id="PTHR21011:SF1">
    <property type="entry name" value="SMALL RIBOSOMAL SUBUNIT PROTEIN BS6M"/>
    <property type="match status" value="1"/>
</dbReference>
<dbReference type="Pfam" id="PF01250">
    <property type="entry name" value="Ribosomal_S6"/>
    <property type="match status" value="1"/>
</dbReference>
<dbReference type="SUPFAM" id="SSF54995">
    <property type="entry name" value="Ribosomal protein S6"/>
    <property type="match status" value="1"/>
</dbReference>
<accession>C4K159</accession>
<gene>
    <name evidence="1" type="primary">rpsF</name>
    <name type="ordered locus">RPR_02375</name>
</gene>
<reference key="1">
    <citation type="journal article" date="2009" name="PLoS ONE">
        <title>Genome sequence of the endosymbiont Rickettsia peacockii and comparison with virulent Rickettsia rickettsii: identification of virulence factors.</title>
        <authorList>
            <person name="Felsheim R.F."/>
            <person name="Kurtti T.J."/>
            <person name="Munderloh U.G."/>
        </authorList>
    </citation>
    <scope>NUCLEOTIDE SEQUENCE [LARGE SCALE GENOMIC DNA]</scope>
    <source>
        <strain>Rustic</strain>
    </source>
</reference>
<feature type="chain" id="PRO_1000205406" description="Small ribosomal subunit protein bS6">
    <location>
        <begin position="1"/>
        <end position="121"/>
    </location>
</feature>
<protein>
    <recommendedName>
        <fullName evidence="1">Small ribosomal subunit protein bS6</fullName>
    </recommendedName>
    <alternativeName>
        <fullName evidence="2">30S ribosomal protein S6</fullName>
    </alternativeName>
</protein>
<comment type="function">
    <text evidence="1">Binds together with bS18 to 16S ribosomal RNA.</text>
</comment>
<comment type="similarity">
    <text evidence="1">Belongs to the bacterial ribosomal protein bS6 family.</text>
</comment>
<evidence type="ECO:0000255" key="1">
    <source>
        <dbReference type="HAMAP-Rule" id="MF_00360"/>
    </source>
</evidence>
<evidence type="ECO:0000305" key="2"/>
<keyword id="KW-0687">Ribonucleoprotein</keyword>
<keyword id="KW-0689">Ribosomal protein</keyword>
<keyword id="KW-0694">RNA-binding</keyword>
<keyword id="KW-0699">rRNA-binding</keyword>